<keyword id="KW-0687">Ribonucleoprotein</keyword>
<keyword id="KW-0689">Ribosomal protein</keyword>
<keyword id="KW-0694">RNA-binding</keyword>
<keyword id="KW-0699">rRNA-binding</keyword>
<sequence>MSMQDPLADMLTRIRNAQMAEKSVVSMPSSKLKVAVAKVLKDEGYIAGYQISSETKPLLSIELKYFEGRSVIEEVKRVSRPGLRQYKSAEDLPKVRGGLGVSIVSTNKGVMTDRAARAAGVGGEVLCTVF</sequence>
<name>RS8_PSEFS</name>
<reference key="1">
    <citation type="journal article" date="2009" name="Genome Biol.">
        <title>Genomic and genetic analyses of diversity and plant interactions of Pseudomonas fluorescens.</title>
        <authorList>
            <person name="Silby M.W."/>
            <person name="Cerdeno-Tarraga A.M."/>
            <person name="Vernikos G.S."/>
            <person name="Giddens S.R."/>
            <person name="Jackson R.W."/>
            <person name="Preston G.M."/>
            <person name="Zhang X.-X."/>
            <person name="Moon C.D."/>
            <person name="Gehrig S.M."/>
            <person name="Godfrey S.A.C."/>
            <person name="Knight C.G."/>
            <person name="Malone J.G."/>
            <person name="Robinson Z."/>
            <person name="Spiers A.J."/>
            <person name="Harris S."/>
            <person name="Challis G.L."/>
            <person name="Yaxley A.M."/>
            <person name="Harris D."/>
            <person name="Seeger K."/>
            <person name="Murphy L."/>
            <person name="Rutter S."/>
            <person name="Squares R."/>
            <person name="Quail M.A."/>
            <person name="Saunders E."/>
            <person name="Mavromatis K."/>
            <person name="Brettin T.S."/>
            <person name="Bentley S.D."/>
            <person name="Hothersall J."/>
            <person name="Stephens E."/>
            <person name="Thomas C.M."/>
            <person name="Parkhill J."/>
            <person name="Levy S.B."/>
            <person name="Rainey P.B."/>
            <person name="Thomson N.R."/>
        </authorList>
    </citation>
    <scope>NUCLEOTIDE SEQUENCE [LARGE SCALE GENOMIC DNA]</scope>
    <source>
        <strain>SBW25</strain>
    </source>
</reference>
<protein>
    <recommendedName>
        <fullName evidence="1">Small ribosomal subunit protein uS8</fullName>
    </recommendedName>
    <alternativeName>
        <fullName evidence="2">30S ribosomal protein S8</fullName>
    </alternativeName>
</protein>
<proteinExistence type="inferred from homology"/>
<accession>C3K2W2</accession>
<evidence type="ECO:0000255" key="1">
    <source>
        <dbReference type="HAMAP-Rule" id="MF_01302"/>
    </source>
</evidence>
<evidence type="ECO:0000305" key="2"/>
<gene>
    <name evidence="1" type="primary">rpsH</name>
    <name type="ordered locus">PFLU_5513</name>
</gene>
<dbReference type="EMBL" id="AM181176">
    <property type="protein sequence ID" value="CAY52742.1"/>
    <property type="molecule type" value="Genomic_DNA"/>
</dbReference>
<dbReference type="RefSeq" id="WP_010566853.1">
    <property type="nucleotide sequence ID" value="NC_012660.1"/>
</dbReference>
<dbReference type="SMR" id="C3K2W2"/>
<dbReference type="STRING" id="294.SRM1_05165"/>
<dbReference type="GeneID" id="93467135"/>
<dbReference type="eggNOG" id="COG0096">
    <property type="taxonomic scope" value="Bacteria"/>
</dbReference>
<dbReference type="HOGENOM" id="CLU_098428_0_0_6"/>
<dbReference type="OrthoDB" id="9802617at2"/>
<dbReference type="GO" id="GO:1990904">
    <property type="term" value="C:ribonucleoprotein complex"/>
    <property type="evidence" value="ECO:0007669"/>
    <property type="project" value="UniProtKB-KW"/>
</dbReference>
<dbReference type="GO" id="GO:0005840">
    <property type="term" value="C:ribosome"/>
    <property type="evidence" value="ECO:0007669"/>
    <property type="project" value="UniProtKB-KW"/>
</dbReference>
<dbReference type="GO" id="GO:0019843">
    <property type="term" value="F:rRNA binding"/>
    <property type="evidence" value="ECO:0007669"/>
    <property type="project" value="UniProtKB-UniRule"/>
</dbReference>
<dbReference type="GO" id="GO:0003735">
    <property type="term" value="F:structural constituent of ribosome"/>
    <property type="evidence" value="ECO:0007669"/>
    <property type="project" value="InterPro"/>
</dbReference>
<dbReference type="GO" id="GO:0006412">
    <property type="term" value="P:translation"/>
    <property type="evidence" value="ECO:0007669"/>
    <property type="project" value="UniProtKB-UniRule"/>
</dbReference>
<dbReference type="FunFam" id="3.30.1370.30:FF:000003">
    <property type="entry name" value="30S ribosomal protein S8"/>
    <property type="match status" value="1"/>
</dbReference>
<dbReference type="FunFam" id="3.30.1490.10:FF:000001">
    <property type="entry name" value="30S ribosomal protein S8"/>
    <property type="match status" value="1"/>
</dbReference>
<dbReference type="Gene3D" id="3.30.1370.30">
    <property type="match status" value="1"/>
</dbReference>
<dbReference type="Gene3D" id="3.30.1490.10">
    <property type="match status" value="1"/>
</dbReference>
<dbReference type="HAMAP" id="MF_01302_B">
    <property type="entry name" value="Ribosomal_uS8_B"/>
    <property type="match status" value="1"/>
</dbReference>
<dbReference type="InterPro" id="IPR000630">
    <property type="entry name" value="Ribosomal_uS8"/>
</dbReference>
<dbReference type="InterPro" id="IPR047863">
    <property type="entry name" value="Ribosomal_uS8_CS"/>
</dbReference>
<dbReference type="InterPro" id="IPR035987">
    <property type="entry name" value="Ribosomal_uS8_sf"/>
</dbReference>
<dbReference type="NCBIfam" id="NF001109">
    <property type="entry name" value="PRK00136.1"/>
    <property type="match status" value="1"/>
</dbReference>
<dbReference type="PANTHER" id="PTHR11758">
    <property type="entry name" value="40S RIBOSOMAL PROTEIN S15A"/>
    <property type="match status" value="1"/>
</dbReference>
<dbReference type="Pfam" id="PF00410">
    <property type="entry name" value="Ribosomal_S8"/>
    <property type="match status" value="1"/>
</dbReference>
<dbReference type="SUPFAM" id="SSF56047">
    <property type="entry name" value="Ribosomal protein S8"/>
    <property type="match status" value="1"/>
</dbReference>
<dbReference type="PROSITE" id="PS00053">
    <property type="entry name" value="RIBOSOMAL_S8"/>
    <property type="match status" value="1"/>
</dbReference>
<feature type="chain" id="PRO_1000214261" description="Small ribosomal subunit protein uS8">
    <location>
        <begin position="1"/>
        <end position="130"/>
    </location>
</feature>
<organism>
    <name type="scientific">Pseudomonas fluorescens (strain SBW25)</name>
    <dbReference type="NCBI Taxonomy" id="216595"/>
    <lineage>
        <taxon>Bacteria</taxon>
        <taxon>Pseudomonadati</taxon>
        <taxon>Pseudomonadota</taxon>
        <taxon>Gammaproteobacteria</taxon>
        <taxon>Pseudomonadales</taxon>
        <taxon>Pseudomonadaceae</taxon>
        <taxon>Pseudomonas</taxon>
    </lineage>
</organism>
<comment type="function">
    <text evidence="1">One of the primary rRNA binding proteins, it binds directly to 16S rRNA central domain where it helps coordinate assembly of the platform of the 30S subunit.</text>
</comment>
<comment type="subunit">
    <text evidence="1">Part of the 30S ribosomal subunit. Contacts proteins S5 and S12.</text>
</comment>
<comment type="similarity">
    <text evidence="1">Belongs to the universal ribosomal protein uS8 family.</text>
</comment>